<reference key="1">
    <citation type="journal article" date="2009" name="PLoS Genet.">
        <title>Organised genome dynamics in the Escherichia coli species results in highly diverse adaptive paths.</title>
        <authorList>
            <person name="Touchon M."/>
            <person name="Hoede C."/>
            <person name="Tenaillon O."/>
            <person name="Barbe V."/>
            <person name="Baeriswyl S."/>
            <person name="Bidet P."/>
            <person name="Bingen E."/>
            <person name="Bonacorsi S."/>
            <person name="Bouchier C."/>
            <person name="Bouvet O."/>
            <person name="Calteau A."/>
            <person name="Chiapello H."/>
            <person name="Clermont O."/>
            <person name="Cruveiller S."/>
            <person name="Danchin A."/>
            <person name="Diard M."/>
            <person name="Dossat C."/>
            <person name="Karoui M.E."/>
            <person name="Frapy E."/>
            <person name="Garry L."/>
            <person name="Ghigo J.M."/>
            <person name="Gilles A.M."/>
            <person name="Johnson J."/>
            <person name="Le Bouguenec C."/>
            <person name="Lescat M."/>
            <person name="Mangenot S."/>
            <person name="Martinez-Jehanne V."/>
            <person name="Matic I."/>
            <person name="Nassif X."/>
            <person name="Oztas S."/>
            <person name="Petit M.A."/>
            <person name="Pichon C."/>
            <person name="Rouy Z."/>
            <person name="Ruf C.S."/>
            <person name="Schneider D."/>
            <person name="Tourret J."/>
            <person name="Vacherie B."/>
            <person name="Vallenet D."/>
            <person name="Medigue C."/>
            <person name="Rocha E.P.C."/>
            <person name="Denamur E."/>
        </authorList>
    </citation>
    <scope>NUCLEOTIDE SEQUENCE [LARGE SCALE GENOMIC DNA]</scope>
    <source>
        <strain>S88 / ExPEC</strain>
    </source>
</reference>
<sequence>MQAYFDQLDRVRYEGSKSSNPLAFRHYNPDELVLGKRMEEHLRFAACYWHTFCWNGADMFGVGAFNRPWQQPGEALALAKRKADVAFEFFHKLHVPFYCFHDVDVSPEGASLKEYINNFAQMVDVLAGKQEESGVKLLWGTANCFTNPRYGAGAATNPDPEVFSWAATQVVTAMEATHKLGGENYVLWGGREGYETLLNTDLRQEREQLGRFMQMVVEHKHKIGFQGTLLIEPKPQEPTKHQYDYDAATVYGFLKQFGLEKEIKLNIEANHATLAGHSFHHEIATAIALGLFGSVDANRGDAQLGWDTDQFPNSVEENALVMYEILKAGGFTTGGLNFDAKVRRQSTDKYDLFYGHIGAMDTMALALKIAARMIEDGELDKRIAQRYSGWNSELGQQILKGQMSLADLAKYAQEHNLSPVHQSGRQEQLENLVNHYLFDK</sequence>
<comment type="catalytic activity">
    <reaction evidence="1">
        <text>alpha-D-xylose = alpha-D-xylulofuranose</text>
        <dbReference type="Rhea" id="RHEA:22816"/>
        <dbReference type="ChEBI" id="CHEBI:28518"/>
        <dbReference type="ChEBI" id="CHEBI:188998"/>
        <dbReference type="EC" id="5.3.1.5"/>
    </reaction>
</comment>
<comment type="cofactor">
    <cofactor evidence="1">
        <name>Mg(2+)</name>
        <dbReference type="ChEBI" id="CHEBI:18420"/>
    </cofactor>
    <text evidence="1">Binds 2 magnesium ions per subunit.</text>
</comment>
<comment type="subunit">
    <text evidence="1">Homotetramer.</text>
</comment>
<comment type="subcellular location">
    <subcellularLocation>
        <location evidence="1">Cytoplasm</location>
    </subcellularLocation>
</comment>
<comment type="similarity">
    <text evidence="1">Belongs to the xylose isomerase family.</text>
</comment>
<keyword id="KW-0119">Carbohydrate metabolism</keyword>
<keyword id="KW-0963">Cytoplasm</keyword>
<keyword id="KW-0413">Isomerase</keyword>
<keyword id="KW-0460">Magnesium</keyword>
<keyword id="KW-0479">Metal-binding</keyword>
<keyword id="KW-1185">Reference proteome</keyword>
<keyword id="KW-0859">Xylose metabolism</keyword>
<protein>
    <recommendedName>
        <fullName evidence="1">Xylose isomerase</fullName>
        <ecNumber evidence="1">5.3.1.5</ecNumber>
    </recommendedName>
</protein>
<proteinExistence type="inferred from homology"/>
<name>XYLA_ECO45</name>
<dbReference type="EC" id="5.3.1.5" evidence="1"/>
<dbReference type="EMBL" id="CU928161">
    <property type="protein sequence ID" value="CAR05192.1"/>
    <property type="molecule type" value="Genomic_DNA"/>
</dbReference>
<dbReference type="RefSeq" id="WP_001149592.1">
    <property type="nucleotide sequence ID" value="NC_011742.1"/>
</dbReference>
<dbReference type="SMR" id="B7MES1"/>
<dbReference type="GeneID" id="75173765"/>
<dbReference type="KEGG" id="ecz:ECS88_3983"/>
<dbReference type="HOGENOM" id="CLU_037261_1_0_6"/>
<dbReference type="Proteomes" id="UP000000747">
    <property type="component" value="Chromosome"/>
</dbReference>
<dbReference type="GO" id="GO:0005737">
    <property type="term" value="C:cytoplasm"/>
    <property type="evidence" value="ECO:0007669"/>
    <property type="project" value="UniProtKB-SubCell"/>
</dbReference>
<dbReference type="GO" id="GO:0000287">
    <property type="term" value="F:magnesium ion binding"/>
    <property type="evidence" value="ECO:0007669"/>
    <property type="project" value="UniProtKB-UniRule"/>
</dbReference>
<dbReference type="GO" id="GO:0009045">
    <property type="term" value="F:xylose isomerase activity"/>
    <property type="evidence" value="ECO:0007669"/>
    <property type="project" value="UniProtKB-UniRule"/>
</dbReference>
<dbReference type="GO" id="GO:0042732">
    <property type="term" value="P:D-xylose metabolic process"/>
    <property type="evidence" value="ECO:0007669"/>
    <property type="project" value="UniProtKB-UniRule"/>
</dbReference>
<dbReference type="FunFam" id="3.20.20.150:FF:000002">
    <property type="entry name" value="Xylose isomerase"/>
    <property type="match status" value="1"/>
</dbReference>
<dbReference type="Gene3D" id="3.20.20.150">
    <property type="entry name" value="Divalent-metal-dependent TIM barrel enzymes"/>
    <property type="match status" value="1"/>
</dbReference>
<dbReference type="HAMAP" id="MF_00455">
    <property type="entry name" value="Xylose_isom_A"/>
    <property type="match status" value="1"/>
</dbReference>
<dbReference type="InterPro" id="IPR036237">
    <property type="entry name" value="Xyl_isomerase-like_sf"/>
</dbReference>
<dbReference type="InterPro" id="IPR013452">
    <property type="entry name" value="Xylose_isom_bac"/>
</dbReference>
<dbReference type="InterPro" id="IPR001998">
    <property type="entry name" value="Xylose_isomerase"/>
</dbReference>
<dbReference type="NCBIfam" id="NF003998">
    <property type="entry name" value="PRK05474.1"/>
    <property type="match status" value="1"/>
</dbReference>
<dbReference type="NCBIfam" id="TIGR02630">
    <property type="entry name" value="xylose_isom_A"/>
    <property type="match status" value="1"/>
</dbReference>
<dbReference type="PANTHER" id="PTHR48408">
    <property type="match status" value="1"/>
</dbReference>
<dbReference type="PANTHER" id="PTHR48408:SF1">
    <property type="entry name" value="XYLOSE ISOMERASE"/>
    <property type="match status" value="1"/>
</dbReference>
<dbReference type="PRINTS" id="PR00688">
    <property type="entry name" value="XYLOSISMRASE"/>
</dbReference>
<dbReference type="SUPFAM" id="SSF51658">
    <property type="entry name" value="Xylose isomerase-like"/>
    <property type="match status" value="1"/>
</dbReference>
<dbReference type="PROSITE" id="PS51415">
    <property type="entry name" value="XYLOSE_ISOMERASE"/>
    <property type="match status" value="1"/>
</dbReference>
<feature type="chain" id="PRO_1000200294" description="Xylose isomerase">
    <location>
        <begin position="1"/>
        <end position="440"/>
    </location>
</feature>
<feature type="active site" evidence="1">
    <location>
        <position position="101"/>
    </location>
</feature>
<feature type="active site" evidence="1">
    <location>
        <position position="104"/>
    </location>
</feature>
<feature type="binding site" evidence="1">
    <location>
        <position position="232"/>
    </location>
    <ligand>
        <name>Mg(2+)</name>
        <dbReference type="ChEBI" id="CHEBI:18420"/>
        <label>1</label>
    </ligand>
</feature>
<feature type="binding site" evidence="1">
    <location>
        <position position="268"/>
    </location>
    <ligand>
        <name>Mg(2+)</name>
        <dbReference type="ChEBI" id="CHEBI:18420"/>
        <label>1</label>
    </ligand>
</feature>
<feature type="binding site" evidence="1">
    <location>
        <position position="268"/>
    </location>
    <ligand>
        <name>Mg(2+)</name>
        <dbReference type="ChEBI" id="CHEBI:18420"/>
        <label>2</label>
    </ligand>
</feature>
<feature type="binding site" evidence="1">
    <location>
        <position position="271"/>
    </location>
    <ligand>
        <name>Mg(2+)</name>
        <dbReference type="ChEBI" id="CHEBI:18420"/>
        <label>2</label>
    </ligand>
</feature>
<feature type="binding site" evidence="1">
    <location>
        <position position="296"/>
    </location>
    <ligand>
        <name>Mg(2+)</name>
        <dbReference type="ChEBI" id="CHEBI:18420"/>
        <label>1</label>
    </ligand>
</feature>
<feature type="binding site" evidence="1">
    <location>
        <position position="307"/>
    </location>
    <ligand>
        <name>Mg(2+)</name>
        <dbReference type="ChEBI" id="CHEBI:18420"/>
        <label>2</label>
    </ligand>
</feature>
<feature type="binding site" evidence="1">
    <location>
        <position position="309"/>
    </location>
    <ligand>
        <name>Mg(2+)</name>
        <dbReference type="ChEBI" id="CHEBI:18420"/>
        <label>2</label>
    </ligand>
</feature>
<feature type="binding site" evidence="1">
    <location>
        <position position="339"/>
    </location>
    <ligand>
        <name>Mg(2+)</name>
        <dbReference type="ChEBI" id="CHEBI:18420"/>
        <label>1</label>
    </ligand>
</feature>
<organism>
    <name type="scientific">Escherichia coli O45:K1 (strain S88 / ExPEC)</name>
    <dbReference type="NCBI Taxonomy" id="585035"/>
    <lineage>
        <taxon>Bacteria</taxon>
        <taxon>Pseudomonadati</taxon>
        <taxon>Pseudomonadota</taxon>
        <taxon>Gammaproteobacteria</taxon>
        <taxon>Enterobacterales</taxon>
        <taxon>Enterobacteriaceae</taxon>
        <taxon>Escherichia</taxon>
    </lineage>
</organism>
<accession>B7MES1</accession>
<evidence type="ECO:0000255" key="1">
    <source>
        <dbReference type="HAMAP-Rule" id="MF_00455"/>
    </source>
</evidence>
<gene>
    <name evidence="1" type="primary">xylA</name>
    <name type="ordered locus">ECS88_3983</name>
</gene>